<reference key="1">
    <citation type="submission" date="2003-09" db="EMBL/GenBank/DDBJ databases">
        <authorList>
            <consortium name="NIH - Xenopus Gene Collection (XGC) project"/>
        </authorList>
    </citation>
    <scope>NUCLEOTIDE SEQUENCE [LARGE SCALE MRNA]</scope>
    <source>
        <tissue>Embryo</tissue>
    </source>
</reference>
<proteinExistence type="evidence at transcript level"/>
<feature type="chain" id="PRO_0000361277" description="Actin filament-associated protein 1-like 2">
    <location>
        <begin position="1"/>
        <end position="811"/>
    </location>
</feature>
<feature type="domain" description="PH 1" evidence="3">
    <location>
        <begin position="181"/>
        <end position="277"/>
    </location>
</feature>
<feature type="domain" description="PH 2" evidence="3">
    <location>
        <begin position="359"/>
        <end position="453"/>
    </location>
</feature>
<feature type="region of interest" description="Disordered" evidence="4">
    <location>
        <begin position="67"/>
        <end position="110"/>
    </location>
</feature>
<feature type="region of interest" description="Disordered" evidence="4">
    <location>
        <begin position="132"/>
        <end position="168"/>
    </location>
</feature>
<feature type="region of interest" description="Disordered" evidence="4">
    <location>
        <begin position="294"/>
        <end position="326"/>
    </location>
</feature>
<feature type="region of interest" description="Disordered" evidence="4">
    <location>
        <begin position="500"/>
        <end position="532"/>
    </location>
</feature>
<feature type="region of interest" description="Disordered" evidence="4">
    <location>
        <begin position="558"/>
        <end position="631"/>
    </location>
</feature>
<feature type="coiled-coil region" evidence="2">
    <location>
        <begin position="642"/>
        <end position="737"/>
    </location>
</feature>
<feature type="compositionally biased region" description="Basic and acidic residues" evidence="4">
    <location>
        <begin position="299"/>
        <end position="309"/>
    </location>
</feature>
<feature type="compositionally biased region" description="Basic and acidic residues" evidence="4">
    <location>
        <begin position="521"/>
        <end position="532"/>
    </location>
</feature>
<feature type="compositionally biased region" description="Basic and acidic residues" evidence="4">
    <location>
        <begin position="566"/>
        <end position="577"/>
    </location>
</feature>
<feature type="compositionally biased region" description="Basic and acidic residues" evidence="4">
    <location>
        <begin position="622"/>
        <end position="631"/>
    </location>
</feature>
<organism>
    <name type="scientific">Xenopus laevis</name>
    <name type="common">African clawed frog</name>
    <dbReference type="NCBI Taxonomy" id="8355"/>
    <lineage>
        <taxon>Eukaryota</taxon>
        <taxon>Metazoa</taxon>
        <taxon>Chordata</taxon>
        <taxon>Craniata</taxon>
        <taxon>Vertebrata</taxon>
        <taxon>Euteleostomi</taxon>
        <taxon>Amphibia</taxon>
        <taxon>Batrachia</taxon>
        <taxon>Anura</taxon>
        <taxon>Pipoidea</taxon>
        <taxon>Pipidae</taxon>
        <taxon>Xenopodinae</taxon>
        <taxon>Xenopus</taxon>
        <taxon>Xenopus</taxon>
    </lineage>
</organism>
<gene>
    <name type="primary">afap1l2</name>
</gene>
<protein>
    <recommendedName>
        <fullName>Actin filament-associated protein 1-like 2</fullName>
        <shortName>AFAP1-like protein 2</shortName>
    </recommendedName>
</protein>
<sequence length="811" mass="90908">MERYKGLERLLSELEEFLFILDKENLSSAAVLKKSIVSEILQLFIKSNSSCDEEYIYMNKVLETDKKEAQGKQGKAQVLDPPAKETLTNGTAGQHLAPPQKSLPDLPPPKIITEKLPVSKCDSPEGYYEEAEPYNASFNDDGEAVSSSYESYDEDESNKSKSAMQQHQWPSTEASIELMKDAMICAFLWRKKWLGQWAKQLCVVKDTRLMCYKTSKDHNPQLDVNLIGCSVSYKEKQVRRKEHKLKITPTNTDVIVLGMQSKEQAEQWLKVIQDISGLQSDPLCDSSVITADGQRQIHPKAEGTDRHSGASESGSSTDGHPETPEIKEVKKKVTSGLKLSNLMNLGRKKSTSMESPDKALETSNYLNVLINSQWKSRYCCIKDGQLHFYQDRNKTKNAAQPVSLIGCDIIPQPTQDHLYSFRILQNGEELATLEAKSSEDMGHWLGLLLLESGSRSDPEDFTYDYVDADRVSCIVSAAKNSYFLMQRKYCEPNTYIDAPRGQRYQQDDLYDDVDMSDIQGDEPKSEEKGEAEDKMYLDLIPTRSFLHSVGIKSLCQALGSPGPERVSGKKDNEESERGTLSCREQDSSGQVTEETKQVTEDPPQQTSPGTPIIGPSVSASPRLEKSNKERVKATNHVAIETLLGKNRTEAEIKRFTEEKEKLEKEREEIRVQLAQLRKERREMKETVTNCPDKGLLTDLEDKLRLKEEQCKERESYRVDLELKLVEVKENLRKAELGPATLGTSVEPAHLDTTAPSIKSCSPTHAPECSPVTATVGSPVNSAVALKSRPQPIVTTGKVLQKAKEWEKKGAS</sequence>
<name>AF1L2_XENLA</name>
<keyword id="KW-0175">Coiled coil</keyword>
<keyword id="KW-0963">Cytoplasm</keyword>
<keyword id="KW-1185">Reference proteome</keyword>
<keyword id="KW-0677">Repeat</keyword>
<accession>Q6PF55</accession>
<dbReference type="EMBL" id="BC057722">
    <property type="protein sequence ID" value="AAH57722.1"/>
    <property type="molecule type" value="mRNA"/>
</dbReference>
<dbReference type="RefSeq" id="NP_001079952.1">
    <property type="nucleotide sequence ID" value="NM_001086483.1"/>
</dbReference>
<dbReference type="SMR" id="Q6PF55"/>
<dbReference type="DNASU" id="379643"/>
<dbReference type="GeneID" id="379643"/>
<dbReference type="KEGG" id="xla:379643"/>
<dbReference type="AGR" id="Xenbase:XB-GENE-6255187"/>
<dbReference type="CTD" id="379643"/>
<dbReference type="Xenbase" id="XB-GENE-6255187">
    <property type="gene designation" value="afap1l2.L"/>
</dbReference>
<dbReference type="OrthoDB" id="8443615at2759"/>
<dbReference type="Proteomes" id="UP000186698">
    <property type="component" value="Chromosome 7L"/>
</dbReference>
<dbReference type="Bgee" id="379643">
    <property type="expression patterns" value="Expressed in internal ear and 15 other cell types or tissues"/>
</dbReference>
<dbReference type="GO" id="GO:0005829">
    <property type="term" value="C:cytosol"/>
    <property type="evidence" value="ECO:0000318"/>
    <property type="project" value="GO_Central"/>
</dbReference>
<dbReference type="GO" id="GO:0030296">
    <property type="term" value="F:protein tyrosine kinase activator activity"/>
    <property type="evidence" value="ECO:0000318"/>
    <property type="project" value="GO_Central"/>
</dbReference>
<dbReference type="GO" id="GO:0042169">
    <property type="term" value="F:SH2 domain binding"/>
    <property type="evidence" value="ECO:0007669"/>
    <property type="project" value="TreeGrafter"/>
</dbReference>
<dbReference type="GO" id="GO:0017124">
    <property type="term" value="F:SH3 domain binding"/>
    <property type="evidence" value="ECO:0007669"/>
    <property type="project" value="TreeGrafter"/>
</dbReference>
<dbReference type="GO" id="GO:0006954">
    <property type="term" value="P:inflammatory response"/>
    <property type="evidence" value="ECO:0000318"/>
    <property type="project" value="GO_Central"/>
</dbReference>
<dbReference type="GO" id="GO:0045893">
    <property type="term" value="P:positive regulation of DNA-templated transcription"/>
    <property type="evidence" value="ECO:0000318"/>
    <property type="project" value="GO_Central"/>
</dbReference>
<dbReference type="GO" id="GO:0045742">
    <property type="term" value="P:positive regulation of epidermal growth factor receptor signaling pathway"/>
    <property type="evidence" value="ECO:0000318"/>
    <property type="project" value="GO_Central"/>
</dbReference>
<dbReference type="GO" id="GO:0032757">
    <property type="term" value="P:positive regulation of interleukin-8 production"/>
    <property type="evidence" value="ECO:0007669"/>
    <property type="project" value="TreeGrafter"/>
</dbReference>
<dbReference type="GO" id="GO:0032675">
    <property type="term" value="P:regulation of interleukin-6 production"/>
    <property type="evidence" value="ECO:0007669"/>
    <property type="project" value="TreeGrafter"/>
</dbReference>
<dbReference type="GO" id="GO:0007346">
    <property type="term" value="P:regulation of mitotic cell cycle"/>
    <property type="evidence" value="ECO:0000318"/>
    <property type="project" value="GO_Central"/>
</dbReference>
<dbReference type="CDD" id="cd13306">
    <property type="entry name" value="PH1_AFAP"/>
    <property type="match status" value="1"/>
</dbReference>
<dbReference type="CDD" id="cd13307">
    <property type="entry name" value="PH2_AFAP"/>
    <property type="match status" value="1"/>
</dbReference>
<dbReference type="FunFam" id="2.30.29.30:FF:000020">
    <property type="entry name" value="Actin filament-associated protein 1-like 2 isoform 1"/>
    <property type="match status" value="1"/>
</dbReference>
<dbReference type="FunFam" id="2.30.29.30:FF:000171">
    <property type="entry name" value="Actin filament-associated protein 1-like 2 isoform 1"/>
    <property type="match status" value="1"/>
</dbReference>
<dbReference type="Gene3D" id="2.30.29.30">
    <property type="entry name" value="Pleckstrin-homology domain (PH domain)/Phosphotyrosine-binding domain (PTB)"/>
    <property type="match status" value="2"/>
</dbReference>
<dbReference type="InterPro" id="IPR030113">
    <property type="entry name" value="AFAP"/>
</dbReference>
<dbReference type="InterPro" id="IPR011993">
    <property type="entry name" value="PH-like_dom_sf"/>
</dbReference>
<dbReference type="InterPro" id="IPR001849">
    <property type="entry name" value="PH_domain"/>
</dbReference>
<dbReference type="PANTHER" id="PTHR14338">
    <property type="entry name" value="ACTIN FILAMENT-ASSOCIATED PROTEIN 1 FAMILY MEMBER"/>
    <property type="match status" value="1"/>
</dbReference>
<dbReference type="PANTHER" id="PTHR14338:SF4">
    <property type="entry name" value="ACTIN FILAMENT-ASSOCIATED PROTEIN 1-LIKE 2"/>
    <property type="match status" value="1"/>
</dbReference>
<dbReference type="Pfam" id="PF00169">
    <property type="entry name" value="PH"/>
    <property type="match status" value="2"/>
</dbReference>
<dbReference type="SMART" id="SM00233">
    <property type="entry name" value="PH"/>
    <property type="match status" value="2"/>
</dbReference>
<dbReference type="SUPFAM" id="SSF50729">
    <property type="entry name" value="PH domain-like"/>
    <property type="match status" value="2"/>
</dbReference>
<dbReference type="PROSITE" id="PS50003">
    <property type="entry name" value="PH_DOMAIN"/>
    <property type="match status" value="2"/>
</dbReference>
<comment type="function">
    <text evidence="1">May play a role in a signaling cascade by enhancing the kinase activity of src. Contributes to src-regulated transcription activation (By similarity).</text>
</comment>
<comment type="subunit">
    <text evidence="1">Interacts with src.</text>
</comment>
<comment type="subcellular location">
    <subcellularLocation>
        <location evidence="1">Cytoplasm</location>
    </subcellularLocation>
</comment>
<evidence type="ECO:0000250" key="1"/>
<evidence type="ECO:0000255" key="2"/>
<evidence type="ECO:0000255" key="3">
    <source>
        <dbReference type="PROSITE-ProRule" id="PRU00145"/>
    </source>
</evidence>
<evidence type="ECO:0000256" key="4">
    <source>
        <dbReference type="SAM" id="MobiDB-lite"/>
    </source>
</evidence>